<protein>
    <recommendedName>
        <fullName>FAD assembly factor SdhE</fullName>
    </recommendedName>
</protein>
<dbReference type="EMBL" id="AE017340">
    <property type="protein sequence ID" value="AAV81659.1"/>
    <property type="molecule type" value="Genomic_DNA"/>
</dbReference>
<dbReference type="RefSeq" id="WP_011234070.1">
    <property type="nucleotide sequence ID" value="NC_006512.1"/>
</dbReference>
<dbReference type="SMR" id="Q5R0Z7"/>
<dbReference type="STRING" id="283942.IL0819"/>
<dbReference type="GeneID" id="41335974"/>
<dbReference type="KEGG" id="ilo:IL0819"/>
<dbReference type="eggNOG" id="COG2938">
    <property type="taxonomic scope" value="Bacteria"/>
</dbReference>
<dbReference type="HOGENOM" id="CLU_103054_2_2_6"/>
<dbReference type="OrthoDB" id="9180899at2"/>
<dbReference type="Proteomes" id="UP000001171">
    <property type="component" value="Chromosome"/>
</dbReference>
<dbReference type="GO" id="GO:0005737">
    <property type="term" value="C:cytoplasm"/>
    <property type="evidence" value="ECO:0007669"/>
    <property type="project" value="UniProtKB-SubCell"/>
</dbReference>
<dbReference type="GO" id="GO:0006105">
    <property type="term" value="P:succinate metabolic process"/>
    <property type="evidence" value="ECO:0007669"/>
    <property type="project" value="TreeGrafter"/>
</dbReference>
<dbReference type="Gene3D" id="1.10.150.250">
    <property type="entry name" value="Flavinator of succinate dehydrogenase"/>
    <property type="match status" value="1"/>
</dbReference>
<dbReference type="InterPro" id="IPR005631">
    <property type="entry name" value="SDH"/>
</dbReference>
<dbReference type="InterPro" id="IPR036714">
    <property type="entry name" value="SDH_sf"/>
</dbReference>
<dbReference type="InterPro" id="IPR050531">
    <property type="entry name" value="SdhE_FAD_assembly_factor"/>
</dbReference>
<dbReference type="PANTHER" id="PTHR39585">
    <property type="entry name" value="FAD ASSEMBLY FACTOR SDHE"/>
    <property type="match status" value="1"/>
</dbReference>
<dbReference type="PANTHER" id="PTHR39585:SF1">
    <property type="entry name" value="FAD ASSEMBLY FACTOR SDHE"/>
    <property type="match status" value="1"/>
</dbReference>
<dbReference type="Pfam" id="PF03937">
    <property type="entry name" value="Sdh5"/>
    <property type="match status" value="1"/>
</dbReference>
<dbReference type="SUPFAM" id="SSF109910">
    <property type="entry name" value="YgfY-like"/>
    <property type="match status" value="1"/>
</dbReference>
<comment type="function">
    <text evidence="1">An FAD assembly protein, which accelerates covalent attachment of the cofactor into other proteins. Plays an essential role in the assembly of succinate dehydrogenase (SDH, respiratory complex II), an enzyme complex that is a component of both the tricarboxylic acid cycle and the electron transport chain, and which couples the oxidation of succinate to fumarate with the reduction of ubiquinone (coenzyme Q) to ubiquinol. Required for flavinylation (covalent attachment of FAD) of the flavoprotein subunit SdhA of SDH and other flavinylated proteins as well.</text>
</comment>
<comment type="subcellular location">
    <subcellularLocation>
        <location evidence="1">Cytoplasm</location>
    </subcellularLocation>
</comment>
<comment type="similarity">
    <text evidence="2">Belongs to the SdhE FAD assembly factor family.</text>
</comment>
<name>SDHE_IDILO</name>
<gene>
    <name type="primary">sdhE</name>
    <name type="ordered locus">IL0819</name>
</gene>
<organism>
    <name type="scientific">Idiomarina loihiensis (strain ATCC BAA-735 / DSM 15497 / L2-TR)</name>
    <dbReference type="NCBI Taxonomy" id="283942"/>
    <lineage>
        <taxon>Bacteria</taxon>
        <taxon>Pseudomonadati</taxon>
        <taxon>Pseudomonadota</taxon>
        <taxon>Gammaproteobacteria</taxon>
        <taxon>Alteromonadales</taxon>
        <taxon>Idiomarinaceae</taxon>
        <taxon>Idiomarina</taxon>
    </lineage>
</organism>
<sequence>MLPLKQSEEALKDKRRLRWACRRGMLELDVLFEPFVDQAYDELSEEQKAVFRRLITCDDPDLFAWFMGHQKCEDEELAEMIRFMLSRVKV</sequence>
<accession>Q5R0Z7</accession>
<evidence type="ECO:0000250" key="1">
    <source>
        <dbReference type="UniProtKB" id="G4V4G2"/>
    </source>
</evidence>
<evidence type="ECO:0000305" key="2"/>
<reference key="1">
    <citation type="journal article" date="2004" name="Proc. Natl. Acad. Sci. U.S.A.">
        <title>Genome sequence of the deep-sea gamma-proteobacterium Idiomarina loihiensis reveals amino acid fermentation as a source of carbon and energy.</title>
        <authorList>
            <person name="Hou S."/>
            <person name="Saw J.H."/>
            <person name="Lee K.S."/>
            <person name="Freitas T.A."/>
            <person name="Belisle C."/>
            <person name="Kawarabayasi Y."/>
            <person name="Donachie S.P."/>
            <person name="Pikina A."/>
            <person name="Galperin M.Y."/>
            <person name="Koonin E.V."/>
            <person name="Makarova K.S."/>
            <person name="Omelchenko M.V."/>
            <person name="Sorokin A."/>
            <person name="Wolf Y.I."/>
            <person name="Li Q.X."/>
            <person name="Keum Y.S."/>
            <person name="Campbell S."/>
            <person name="Denery J."/>
            <person name="Aizawa S."/>
            <person name="Shibata S."/>
            <person name="Malahoff A."/>
            <person name="Alam M."/>
        </authorList>
    </citation>
    <scope>NUCLEOTIDE SEQUENCE [LARGE SCALE GENOMIC DNA]</scope>
    <source>
        <strain>ATCC BAA-735 / DSM 15497 / L2-TR</strain>
    </source>
</reference>
<proteinExistence type="inferred from homology"/>
<feature type="chain" id="PRO_0000214402" description="FAD assembly factor SdhE">
    <location>
        <begin position="1"/>
        <end position="90"/>
    </location>
</feature>
<keyword id="KW-0143">Chaperone</keyword>
<keyword id="KW-0963">Cytoplasm</keyword>
<keyword id="KW-1185">Reference proteome</keyword>